<comment type="function">
    <text evidence="1">Catalyzes the attachment of serine to tRNA(Ser). Is also able to aminoacylate tRNA(Sec) with serine, to form the misacylated tRNA L-seryl-tRNA(Sec), which will be further converted into selenocysteinyl-tRNA(Sec).</text>
</comment>
<comment type="catalytic activity">
    <reaction evidence="1">
        <text>tRNA(Ser) + L-serine + ATP = L-seryl-tRNA(Ser) + AMP + diphosphate + H(+)</text>
        <dbReference type="Rhea" id="RHEA:12292"/>
        <dbReference type="Rhea" id="RHEA-COMP:9669"/>
        <dbReference type="Rhea" id="RHEA-COMP:9703"/>
        <dbReference type="ChEBI" id="CHEBI:15378"/>
        <dbReference type="ChEBI" id="CHEBI:30616"/>
        <dbReference type="ChEBI" id="CHEBI:33019"/>
        <dbReference type="ChEBI" id="CHEBI:33384"/>
        <dbReference type="ChEBI" id="CHEBI:78442"/>
        <dbReference type="ChEBI" id="CHEBI:78533"/>
        <dbReference type="ChEBI" id="CHEBI:456215"/>
        <dbReference type="EC" id="6.1.1.11"/>
    </reaction>
</comment>
<comment type="catalytic activity">
    <reaction evidence="1">
        <text>tRNA(Sec) + L-serine + ATP = L-seryl-tRNA(Sec) + AMP + diphosphate + H(+)</text>
        <dbReference type="Rhea" id="RHEA:42580"/>
        <dbReference type="Rhea" id="RHEA-COMP:9742"/>
        <dbReference type="Rhea" id="RHEA-COMP:10128"/>
        <dbReference type="ChEBI" id="CHEBI:15378"/>
        <dbReference type="ChEBI" id="CHEBI:30616"/>
        <dbReference type="ChEBI" id="CHEBI:33019"/>
        <dbReference type="ChEBI" id="CHEBI:33384"/>
        <dbReference type="ChEBI" id="CHEBI:78442"/>
        <dbReference type="ChEBI" id="CHEBI:78533"/>
        <dbReference type="ChEBI" id="CHEBI:456215"/>
        <dbReference type="EC" id="6.1.1.11"/>
    </reaction>
</comment>
<comment type="pathway">
    <text evidence="1">Aminoacyl-tRNA biosynthesis; selenocysteinyl-tRNA(Sec) biosynthesis; L-seryl-tRNA(Sec) from L-serine and tRNA(Sec): step 1/1.</text>
</comment>
<comment type="subunit">
    <text evidence="1">Homodimer. The tRNA molecule binds across the dimer.</text>
</comment>
<comment type="subcellular location">
    <subcellularLocation>
        <location evidence="1">Cytoplasm</location>
    </subcellularLocation>
</comment>
<comment type="domain">
    <text evidence="1">Consists of two distinct domains, a catalytic core and a N-terminal extension that is involved in tRNA binding.</text>
</comment>
<comment type="similarity">
    <text evidence="1">Belongs to the class-II aminoacyl-tRNA synthetase family. Type-1 seryl-tRNA synthetase subfamily.</text>
</comment>
<dbReference type="EC" id="6.1.1.11" evidence="1"/>
<dbReference type="EMBL" id="CP000744">
    <property type="protein sequence ID" value="ABR86591.1"/>
    <property type="molecule type" value="Genomic_DNA"/>
</dbReference>
<dbReference type="RefSeq" id="WP_012075461.1">
    <property type="nucleotide sequence ID" value="NC_009656.1"/>
</dbReference>
<dbReference type="SMR" id="A6V4H5"/>
<dbReference type="KEGG" id="pap:PSPA7_2596"/>
<dbReference type="HOGENOM" id="CLU_023797_1_1_6"/>
<dbReference type="UniPathway" id="UPA00906">
    <property type="reaction ID" value="UER00895"/>
</dbReference>
<dbReference type="Proteomes" id="UP000001582">
    <property type="component" value="Chromosome"/>
</dbReference>
<dbReference type="GO" id="GO:0005737">
    <property type="term" value="C:cytoplasm"/>
    <property type="evidence" value="ECO:0007669"/>
    <property type="project" value="UniProtKB-SubCell"/>
</dbReference>
<dbReference type="GO" id="GO:0005524">
    <property type="term" value="F:ATP binding"/>
    <property type="evidence" value="ECO:0007669"/>
    <property type="project" value="UniProtKB-UniRule"/>
</dbReference>
<dbReference type="GO" id="GO:0004828">
    <property type="term" value="F:serine-tRNA ligase activity"/>
    <property type="evidence" value="ECO:0007669"/>
    <property type="project" value="UniProtKB-UniRule"/>
</dbReference>
<dbReference type="GO" id="GO:0016260">
    <property type="term" value="P:selenocysteine biosynthetic process"/>
    <property type="evidence" value="ECO:0007669"/>
    <property type="project" value="UniProtKB-UniRule"/>
</dbReference>
<dbReference type="GO" id="GO:0006434">
    <property type="term" value="P:seryl-tRNA aminoacylation"/>
    <property type="evidence" value="ECO:0007669"/>
    <property type="project" value="UniProtKB-UniRule"/>
</dbReference>
<dbReference type="CDD" id="cd00770">
    <property type="entry name" value="SerRS_core"/>
    <property type="match status" value="1"/>
</dbReference>
<dbReference type="Gene3D" id="3.30.930.10">
    <property type="entry name" value="Bira Bifunctional Protein, Domain 2"/>
    <property type="match status" value="1"/>
</dbReference>
<dbReference type="Gene3D" id="1.10.287.40">
    <property type="entry name" value="Serine-tRNA synthetase, tRNA binding domain"/>
    <property type="match status" value="1"/>
</dbReference>
<dbReference type="HAMAP" id="MF_00176">
    <property type="entry name" value="Ser_tRNA_synth_type1"/>
    <property type="match status" value="1"/>
</dbReference>
<dbReference type="InterPro" id="IPR002314">
    <property type="entry name" value="aa-tRNA-synt_IIb"/>
</dbReference>
<dbReference type="InterPro" id="IPR006195">
    <property type="entry name" value="aa-tRNA-synth_II"/>
</dbReference>
<dbReference type="InterPro" id="IPR045864">
    <property type="entry name" value="aa-tRNA-synth_II/BPL/LPL"/>
</dbReference>
<dbReference type="InterPro" id="IPR002317">
    <property type="entry name" value="Ser-tRNA-ligase_type_1"/>
</dbReference>
<dbReference type="InterPro" id="IPR015866">
    <property type="entry name" value="Ser-tRNA-synth_1_N"/>
</dbReference>
<dbReference type="InterPro" id="IPR042103">
    <property type="entry name" value="SerRS_1_N_sf"/>
</dbReference>
<dbReference type="InterPro" id="IPR033729">
    <property type="entry name" value="SerRS_core"/>
</dbReference>
<dbReference type="InterPro" id="IPR010978">
    <property type="entry name" value="tRNA-bd_arm"/>
</dbReference>
<dbReference type="NCBIfam" id="TIGR00414">
    <property type="entry name" value="serS"/>
    <property type="match status" value="1"/>
</dbReference>
<dbReference type="PANTHER" id="PTHR43697:SF1">
    <property type="entry name" value="SERINE--TRNA LIGASE"/>
    <property type="match status" value="1"/>
</dbReference>
<dbReference type="PANTHER" id="PTHR43697">
    <property type="entry name" value="SERYL-TRNA SYNTHETASE"/>
    <property type="match status" value="1"/>
</dbReference>
<dbReference type="Pfam" id="PF02403">
    <property type="entry name" value="Seryl_tRNA_N"/>
    <property type="match status" value="1"/>
</dbReference>
<dbReference type="Pfam" id="PF00587">
    <property type="entry name" value="tRNA-synt_2b"/>
    <property type="match status" value="1"/>
</dbReference>
<dbReference type="PIRSF" id="PIRSF001529">
    <property type="entry name" value="Ser-tRNA-synth_IIa"/>
    <property type="match status" value="1"/>
</dbReference>
<dbReference type="PRINTS" id="PR00981">
    <property type="entry name" value="TRNASYNTHSER"/>
</dbReference>
<dbReference type="SUPFAM" id="SSF55681">
    <property type="entry name" value="Class II aaRS and biotin synthetases"/>
    <property type="match status" value="1"/>
</dbReference>
<dbReference type="SUPFAM" id="SSF46589">
    <property type="entry name" value="tRNA-binding arm"/>
    <property type="match status" value="1"/>
</dbReference>
<dbReference type="PROSITE" id="PS50862">
    <property type="entry name" value="AA_TRNA_LIGASE_II"/>
    <property type="match status" value="1"/>
</dbReference>
<name>SYS_PSEP7</name>
<reference key="1">
    <citation type="submission" date="2007-06" db="EMBL/GenBank/DDBJ databases">
        <authorList>
            <person name="Dodson R.J."/>
            <person name="Harkins D."/>
            <person name="Paulsen I.T."/>
        </authorList>
    </citation>
    <scope>NUCLEOTIDE SEQUENCE [LARGE SCALE GENOMIC DNA]</scope>
    <source>
        <strain>DSM 24068 / PA7</strain>
    </source>
</reference>
<gene>
    <name evidence="1" type="primary">serS</name>
    <name type="ordered locus">PSPA7_2596</name>
</gene>
<feature type="chain" id="PRO_1000019772" description="Serine--tRNA ligase">
    <location>
        <begin position="1"/>
        <end position="426"/>
    </location>
</feature>
<feature type="binding site" evidence="1">
    <location>
        <begin position="233"/>
        <end position="235"/>
    </location>
    <ligand>
        <name>L-serine</name>
        <dbReference type="ChEBI" id="CHEBI:33384"/>
    </ligand>
</feature>
<feature type="binding site" evidence="1">
    <location>
        <begin position="264"/>
        <end position="266"/>
    </location>
    <ligand>
        <name>ATP</name>
        <dbReference type="ChEBI" id="CHEBI:30616"/>
    </ligand>
</feature>
<feature type="binding site" evidence="1">
    <location>
        <position position="287"/>
    </location>
    <ligand>
        <name>L-serine</name>
        <dbReference type="ChEBI" id="CHEBI:33384"/>
    </ligand>
</feature>
<feature type="binding site" evidence="1">
    <location>
        <begin position="351"/>
        <end position="354"/>
    </location>
    <ligand>
        <name>ATP</name>
        <dbReference type="ChEBI" id="CHEBI:30616"/>
    </ligand>
</feature>
<feature type="binding site" evidence="1">
    <location>
        <position position="387"/>
    </location>
    <ligand>
        <name>L-serine</name>
        <dbReference type="ChEBI" id="CHEBI:33384"/>
    </ligand>
</feature>
<accession>A6V4H5</accession>
<evidence type="ECO:0000255" key="1">
    <source>
        <dbReference type="HAMAP-Rule" id="MF_00176"/>
    </source>
</evidence>
<sequence>MLDPKLVRTQPQEVAARLATRGFQLDVARIEALEEQRKSVQTRTEQLQAERNARSKAIGQAKQRGEDIAPLLADVDRMGSELEEGKRQLDAIQGELDSMLLGIPNLPHESVPVGADEDANVEVRRWGMPKTFDFEVKDHVALGERHGWLDFETAAKLSGARFALMRGPIARLHRALAQFMINLHTAEHGYEEAYTPYLVQAPALQGTGQLPKFEEDLFKIGRDGEADLYLIPTAEVSLTNIVSGQILDARQLPLKFVAHTPCFRSEAGASGRDTRGMIRQHQFDKVEMVQIVDPATSYEALEGLTANAERVLQLLELPYRVLALCTGDMGFGATKTYDLEVWVPSQDKYREISSCSNCGDFQARRMQARYRNPETGKPELVHTLNGSGLAVGRTLVAVLENYQQADGSIRVPDVLKPYMGGIEVIG</sequence>
<organism>
    <name type="scientific">Pseudomonas paraeruginosa (strain DSM 24068 / PA7)</name>
    <name type="common">Pseudomonas aeruginosa (strain PA7)</name>
    <dbReference type="NCBI Taxonomy" id="381754"/>
    <lineage>
        <taxon>Bacteria</taxon>
        <taxon>Pseudomonadati</taxon>
        <taxon>Pseudomonadota</taxon>
        <taxon>Gammaproteobacteria</taxon>
        <taxon>Pseudomonadales</taxon>
        <taxon>Pseudomonadaceae</taxon>
        <taxon>Pseudomonas</taxon>
        <taxon>Pseudomonas paraeruginosa</taxon>
    </lineage>
</organism>
<keyword id="KW-0030">Aminoacyl-tRNA synthetase</keyword>
<keyword id="KW-0067">ATP-binding</keyword>
<keyword id="KW-0963">Cytoplasm</keyword>
<keyword id="KW-0436">Ligase</keyword>
<keyword id="KW-0547">Nucleotide-binding</keyword>
<keyword id="KW-0648">Protein biosynthesis</keyword>
<proteinExistence type="inferred from homology"/>
<protein>
    <recommendedName>
        <fullName evidence="1">Serine--tRNA ligase</fullName>
        <ecNumber evidence="1">6.1.1.11</ecNumber>
    </recommendedName>
    <alternativeName>
        <fullName evidence="1">Seryl-tRNA synthetase</fullName>
        <shortName evidence="1">SerRS</shortName>
    </alternativeName>
    <alternativeName>
        <fullName evidence="1">Seryl-tRNA(Ser/Sec) synthetase</fullName>
    </alternativeName>
</protein>